<comment type="function">
    <text evidence="1">Phosphatase that hydrolyzes non-canonical purine nucleotides such as XTP and ITP to their respective diphosphate derivatives. Probably excludes non-canonical purines from DNA/RNA precursor pool, thus preventing their incorporation into DNA/RNA and avoiding chromosomal lesions.</text>
</comment>
<comment type="catalytic activity">
    <reaction evidence="1">
        <text>XTP + H2O = XDP + phosphate + H(+)</text>
        <dbReference type="Rhea" id="RHEA:28406"/>
        <dbReference type="ChEBI" id="CHEBI:15377"/>
        <dbReference type="ChEBI" id="CHEBI:15378"/>
        <dbReference type="ChEBI" id="CHEBI:43474"/>
        <dbReference type="ChEBI" id="CHEBI:59884"/>
        <dbReference type="ChEBI" id="CHEBI:61314"/>
        <dbReference type="EC" id="3.6.1.73"/>
    </reaction>
</comment>
<comment type="catalytic activity">
    <reaction evidence="1">
        <text>ITP + H2O = IDP + phosphate + H(+)</text>
        <dbReference type="Rhea" id="RHEA:28330"/>
        <dbReference type="ChEBI" id="CHEBI:15377"/>
        <dbReference type="ChEBI" id="CHEBI:15378"/>
        <dbReference type="ChEBI" id="CHEBI:43474"/>
        <dbReference type="ChEBI" id="CHEBI:58280"/>
        <dbReference type="ChEBI" id="CHEBI:61402"/>
        <dbReference type="EC" id="3.6.1.73"/>
    </reaction>
</comment>
<comment type="cofactor">
    <cofactor evidence="1">
        <name>Mg(2+)</name>
        <dbReference type="ChEBI" id="CHEBI:18420"/>
    </cofactor>
    <cofactor evidence="1">
        <name>Mn(2+)</name>
        <dbReference type="ChEBI" id="CHEBI:29035"/>
    </cofactor>
    <text evidence="1">Binds 1 divalent metal cation per subunit; can use either Mg(2+) or Mn(2+).</text>
</comment>
<comment type="subunit">
    <text evidence="1">Homodimer.</text>
</comment>
<comment type="similarity">
    <text evidence="1">Belongs to the YjjX NTPase family.</text>
</comment>
<name>NCPP_PYRAE</name>
<keyword id="KW-0378">Hydrolase</keyword>
<keyword id="KW-0460">Magnesium</keyword>
<keyword id="KW-0464">Manganese</keyword>
<keyword id="KW-0479">Metal-binding</keyword>
<keyword id="KW-0546">Nucleotide metabolism</keyword>
<keyword id="KW-0547">Nucleotide-binding</keyword>
<keyword id="KW-1185">Reference proteome</keyword>
<organism>
    <name type="scientific">Pyrobaculum aerophilum (strain ATCC 51768 / DSM 7523 / JCM 9630 / CIP 104966 / NBRC 100827 / IM2)</name>
    <dbReference type="NCBI Taxonomy" id="178306"/>
    <lineage>
        <taxon>Archaea</taxon>
        <taxon>Thermoproteota</taxon>
        <taxon>Thermoprotei</taxon>
        <taxon>Thermoproteales</taxon>
        <taxon>Thermoproteaceae</taxon>
        <taxon>Pyrobaculum</taxon>
    </lineage>
</organism>
<evidence type="ECO:0000255" key="1">
    <source>
        <dbReference type="HAMAP-Rule" id="MF_00648"/>
    </source>
</evidence>
<feature type="chain" id="PRO_0000156362" description="Probable inosine/xanthosine triphosphatase">
    <location>
        <begin position="1"/>
        <end position="178"/>
    </location>
</feature>
<dbReference type="EC" id="3.6.1.73" evidence="1"/>
<dbReference type="EMBL" id="AE009441">
    <property type="protein sequence ID" value="AAL64451.1"/>
    <property type="molecule type" value="Genomic_DNA"/>
</dbReference>
<dbReference type="RefSeq" id="WP_011008919.1">
    <property type="nucleotide sequence ID" value="NC_003364.1"/>
</dbReference>
<dbReference type="SMR" id="Q8ZUF6"/>
<dbReference type="FunCoup" id="Q8ZUF6">
    <property type="interactions" value="16"/>
</dbReference>
<dbReference type="STRING" id="178306.PAE2808"/>
<dbReference type="EnsemblBacteria" id="AAL64451">
    <property type="protein sequence ID" value="AAL64451"/>
    <property type="gene ID" value="PAE2808"/>
</dbReference>
<dbReference type="GeneID" id="1463612"/>
<dbReference type="KEGG" id="pai:PAE2808"/>
<dbReference type="PATRIC" id="fig|178306.9.peg.2094"/>
<dbReference type="eggNOG" id="arCOG01221">
    <property type="taxonomic scope" value="Archaea"/>
</dbReference>
<dbReference type="HOGENOM" id="CLU_087417_0_1_2"/>
<dbReference type="InParanoid" id="Q8ZUF6"/>
<dbReference type="Proteomes" id="UP000002439">
    <property type="component" value="Chromosome"/>
</dbReference>
<dbReference type="GO" id="GO:0103023">
    <property type="term" value="F:ITPase activity"/>
    <property type="evidence" value="ECO:0007669"/>
    <property type="project" value="UniProtKB-EC"/>
</dbReference>
<dbReference type="GO" id="GO:0046872">
    <property type="term" value="F:metal ion binding"/>
    <property type="evidence" value="ECO:0007669"/>
    <property type="project" value="UniProtKB-KW"/>
</dbReference>
<dbReference type="GO" id="GO:0000166">
    <property type="term" value="F:nucleotide binding"/>
    <property type="evidence" value="ECO:0007669"/>
    <property type="project" value="UniProtKB-KW"/>
</dbReference>
<dbReference type="GO" id="GO:0017111">
    <property type="term" value="F:ribonucleoside triphosphate phosphatase activity"/>
    <property type="evidence" value="ECO:0000250"/>
    <property type="project" value="UniProtKB"/>
</dbReference>
<dbReference type="GO" id="GO:0009117">
    <property type="term" value="P:nucleotide metabolic process"/>
    <property type="evidence" value="ECO:0007669"/>
    <property type="project" value="UniProtKB-KW"/>
</dbReference>
<dbReference type="GO" id="GO:0006772">
    <property type="term" value="P:thiamine metabolic process"/>
    <property type="evidence" value="ECO:0000318"/>
    <property type="project" value="GO_Central"/>
</dbReference>
<dbReference type="FunFam" id="3.90.950.10:FF:000002">
    <property type="entry name" value="Inosine/xanthosine triphosphatase"/>
    <property type="match status" value="1"/>
</dbReference>
<dbReference type="Gene3D" id="3.90.950.10">
    <property type="match status" value="1"/>
</dbReference>
<dbReference type="HAMAP" id="MF_00648">
    <property type="entry name" value="Non_canon_purine_NTPase_YjjX"/>
    <property type="match status" value="1"/>
</dbReference>
<dbReference type="InterPro" id="IPR029001">
    <property type="entry name" value="ITPase-like_fam"/>
</dbReference>
<dbReference type="InterPro" id="IPR002786">
    <property type="entry name" value="Non_canon_purine_NTPase"/>
</dbReference>
<dbReference type="InterPro" id="IPR026533">
    <property type="entry name" value="NTPase/PRRC1"/>
</dbReference>
<dbReference type="InterPro" id="IPR050299">
    <property type="entry name" value="YjjX_NTPase"/>
</dbReference>
<dbReference type="PANTHER" id="PTHR34699">
    <property type="match status" value="1"/>
</dbReference>
<dbReference type="PANTHER" id="PTHR34699:SF2">
    <property type="entry name" value="NON-CANONICAL PURINE NTP PHOSPHATASE_PRRC1 DOMAIN-CONTAINING PROTEIN"/>
    <property type="match status" value="1"/>
</dbReference>
<dbReference type="Pfam" id="PF01931">
    <property type="entry name" value="NTPase_I-T"/>
    <property type="match status" value="1"/>
</dbReference>
<dbReference type="SUPFAM" id="SSF52972">
    <property type="entry name" value="ITPase-like"/>
    <property type="match status" value="1"/>
</dbReference>
<protein>
    <recommendedName>
        <fullName evidence="1">Probable inosine/xanthosine triphosphatase</fullName>
        <shortName evidence="1">ITPase/XTPase</shortName>
        <ecNumber evidence="1">3.6.1.73</ecNumber>
    </recommendedName>
    <alternativeName>
        <fullName evidence="1">Non-canonical purine NTP phosphatase</fullName>
    </alternativeName>
    <alternativeName>
        <fullName evidence="1">Non-standard purine NTP phosphatase</fullName>
    </alternativeName>
    <alternativeName>
        <fullName evidence="1">Nucleoside-triphosphate phosphatase</fullName>
        <shortName evidence="1">NTPase</shortName>
    </alternativeName>
</protein>
<reference key="1">
    <citation type="journal article" date="2002" name="Proc. Natl. Acad. Sci. U.S.A.">
        <title>Genome sequence of the hyperthermophilic crenarchaeon Pyrobaculum aerophilum.</title>
        <authorList>
            <person name="Fitz-Gibbon S.T."/>
            <person name="Ladner H."/>
            <person name="Kim U.-J."/>
            <person name="Stetter K.O."/>
            <person name="Simon M.I."/>
            <person name="Miller J.H."/>
        </authorList>
    </citation>
    <scope>NUCLEOTIDE SEQUENCE [LARGE SCALE GENOMIC DNA]</scope>
    <source>
        <strain>ATCC 51768 / DSM 7523 / JCM 9630 / CIP 104966 / NBRC 100827 / IM2</strain>
    </source>
</reference>
<sequence>MIVAVGTKNPNKIRAVEDAYRLFGIPARIVPAPRPLTTPPQPVGLEAVLKGAVERAKAALQAVEKAEHGVGIEAGVVEAGGVHLDITIAAIVDAGGRTTIGFGPAFQIPPPFLSQVLSGVEMGAVAEQYFKRPSIGYREGLIGVLTKRRVTRYHLNLAAVAMALTPRLPHNSQLYLKP</sequence>
<accession>Q8ZUF6</accession>
<proteinExistence type="inferred from homology"/>
<gene>
    <name type="ordered locus">PAE2808</name>
</gene>